<accession>P66473</accession>
<accession>Q97PR3</accession>
<protein>
    <recommendedName>
        <fullName evidence="1">Small ribosomal subunit protein bS18</fullName>
    </recommendedName>
    <alternativeName>
        <fullName evidence="2">30S ribosomal protein S18</fullName>
    </alternativeName>
</protein>
<organism>
    <name type="scientific">Streptococcus pneumoniae (strain ATCC BAA-255 / R6)</name>
    <dbReference type="NCBI Taxonomy" id="171101"/>
    <lineage>
        <taxon>Bacteria</taxon>
        <taxon>Bacillati</taxon>
        <taxon>Bacillota</taxon>
        <taxon>Bacilli</taxon>
        <taxon>Lactobacillales</taxon>
        <taxon>Streptococcaceae</taxon>
        <taxon>Streptococcus</taxon>
    </lineage>
</organism>
<proteinExistence type="inferred from homology"/>
<keyword id="KW-1185">Reference proteome</keyword>
<keyword id="KW-0687">Ribonucleoprotein</keyword>
<keyword id="KW-0689">Ribosomal protein</keyword>
<keyword id="KW-0694">RNA-binding</keyword>
<keyword id="KW-0699">rRNA-binding</keyword>
<name>RS18_STRR6</name>
<gene>
    <name evidence="1" type="primary">rpsR</name>
    <name type="synonym">rs18</name>
    <name type="ordered locus">spr1394</name>
</gene>
<dbReference type="EMBL" id="AE007317">
    <property type="protein sequence ID" value="AAL00198.1"/>
    <property type="molecule type" value="Genomic_DNA"/>
</dbReference>
<dbReference type="PIR" id="A98046">
    <property type="entry name" value="A98046"/>
</dbReference>
<dbReference type="RefSeq" id="NP_358987.1">
    <property type="nucleotide sequence ID" value="NC_003098.1"/>
</dbReference>
<dbReference type="RefSeq" id="WP_000068664.1">
    <property type="nucleotide sequence ID" value="NC_003098.1"/>
</dbReference>
<dbReference type="SMR" id="P66473"/>
<dbReference type="STRING" id="171101.spr1394"/>
<dbReference type="GeneID" id="93963800"/>
<dbReference type="KEGG" id="spr:spr1394"/>
<dbReference type="PATRIC" id="fig|171101.6.peg.1509"/>
<dbReference type="eggNOG" id="COG0238">
    <property type="taxonomic scope" value="Bacteria"/>
</dbReference>
<dbReference type="HOGENOM" id="CLU_148710_2_2_9"/>
<dbReference type="PRO" id="PR:P66473"/>
<dbReference type="Proteomes" id="UP000000586">
    <property type="component" value="Chromosome"/>
</dbReference>
<dbReference type="GO" id="GO:0022627">
    <property type="term" value="C:cytosolic small ribosomal subunit"/>
    <property type="evidence" value="ECO:0000318"/>
    <property type="project" value="GO_Central"/>
</dbReference>
<dbReference type="GO" id="GO:0070181">
    <property type="term" value="F:small ribosomal subunit rRNA binding"/>
    <property type="evidence" value="ECO:0000318"/>
    <property type="project" value="GO_Central"/>
</dbReference>
<dbReference type="GO" id="GO:0003735">
    <property type="term" value="F:structural constituent of ribosome"/>
    <property type="evidence" value="ECO:0000318"/>
    <property type="project" value="GO_Central"/>
</dbReference>
<dbReference type="GO" id="GO:0006412">
    <property type="term" value="P:translation"/>
    <property type="evidence" value="ECO:0000318"/>
    <property type="project" value="GO_Central"/>
</dbReference>
<dbReference type="FunFam" id="4.10.640.10:FF:000003">
    <property type="entry name" value="30S ribosomal protein S18"/>
    <property type="match status" value="1"/>
</dbReference>
<dbReference type="Gene3D" id="4.10.640.10">
    <property type="entry name" value="Ribosomal protein S18"/>
    <property type="match status" value="1"/>
</dbReference>
<dbReference type="HAMAP" id="MF_00270">
    <property type="entry name" value="Ribosomal_bS18"/>
    <property type="match status" value="1"/>
</dbReference>
<dbReference type="InterPro" id="IPR001648">
    <property type="entry name" value="Ribosomal_bS18"/>
</dbReference>
<dbReference type="InterPro" id="IPR018275">
    <property type="entry name" value="Ribosomal_bS18_CS"/>
</dbReference>
<dbReference type="InterPro" id="IPR036870">
    <property type="entry name" value="Ribosomal_bS18_sf"/>
</dbReference>
<dbReference type="NCBIfam" id="TIGR00165">
    <property type="entry name" value="S18"/>
    <property type="match status" value="1"/>
</dbReference>
<dbReference type="PANTHER" id="PTHR13479">
    <property type="entry name" value="30S RIBOSOMAL PROTEIN S18"/>
    <property type="match status" value="1"/>
</dbReference>
<dbReference type="PANTHER" id="PTHR13479:SF40">
    <property type="entry name" value="SMALL RIBOSOMAL SUBUNIT PROTEIN BS18M"/>
    <property type="match status" value="1"/>
</dbReference>
<dbReference type="Pfam" id="PF01084">
    <property type="entry name" value="Ribosomal_S18"/>
    <property type="match status" value="1"/>
</dbReference>
<dbReference type="PRINTS" id="PR00974">
    <property type="entry name" value="RIBOSOMALS18"/>
</dbReference>
<dbReference type="SUPFAM" id="SSF46911">
    <property type="entry name" value="Ribosomal protein S18"/>
    <property type="match status" value="1"/>
</dbReference>
<dbReference type="PROSITE" id="PS00057">
    <property type="entry name" value="RIBOSOMAL_S18"/>
    <property type="match status" value="1"/>
</dbReference>
<sequence length="79" mass="9204">MAQQRRGGFKRRKKVDYIAANKIEYVDYKDTELLSRFVSERGKILPRRVTGTSAKNQRKVTTAIKRARVMALMPFVNED</sequence>
<evidence type="ECO:0000255" key="1">
    <source>
        <dbReference type="HAMAP-Rule" id="MF_00270"/>
    </source>
</evidence>
<evidence type="ECO:0000305" key="2"/>
<reference key="1">
    <citation type="journal article" date="2001" name="J. Bacteriol.">
        <title>Genome of the bacterium Streptococcus pneumoniae strain R6.</title>
        <authorList>
            <person name="Hoskins J."/>
            <person name="Alborn W.E. Jr."/>
            <person name="Arnold J."/>
            <person name="Blaszczak L.C."/>
            <person name="Burgett S."/>
            <person name="DeHoff B.S."/>
            <person name="Estrem S.T."/>
            <person name="Fritz L."/>
            <person name="Fu D.-J."/>
            <person name="Fuller W."/>
            <person name="Geringer C."/>
            <person name="Gilmour R."/>
            <person name="Glass J.S."/>
            <person name="Khoja H."/>
            <person name="Kraft A.R."/>
            <person name="Lagace R.E."/>
            <person name="LeBlanc D.J."/>
            <person name="Lee L.N."/>
            <person name="Lefkowitz E.J."/>
            <person name="Lu J."/>
            <person name="Matsushima P."/>
            <person name="McAhren S.M."/>
            <person name="McHenney M."/>
            <person name="McLeaster K."/>
            <person name="Mundy C.W."/>
            <person name="Nicas T.I."/>
            <person name="Norris F.H."/>
            <person name="O'Gara M."/>
            <person name="Peery R.B."/>
            <person name="Robertson G.T."/>
            <person name="Rockey P."/>
            <person name="Sun P.-M."/>
            <person name="Winkler M.E."/>
            <person name="Yang Y."/>
            <person name="Young-Bellido M."/>
            <person name="Zhao G."/>
            <person name="Zook C.A."/>
            <person name="Baltz R.H."/>
            <person name="Jaskunas S.R."/>
            <person name="Rosteck P.R. Jr."/>
            <person name="Skatrud P.L."/>
            <person name="Glass J.I."/>
        </authorList>
    </citation>
    <scope>NUCLEOTIDE SEQUENCE [LARGE SCALE GENOMIC DNA]</scope>
    <source>
        <strain>ATCC BAA-255 / R6</strain>
    </source>
</reference>
<feature type="chain" id="PRO_0000111239" description="Small ribosomal subunit protein bS18">
    <location>
        <begin position="1"/>
        <end position="79"/>
    </location>
</feature>
<comment type="function">
    <text evidence="1">Binds as a heterodimer with protein bS6 to the central domain of the 16S rRNA, where it helps stabilize the platform of the 30S subunit.</text>
</comment>
<comment type="subunit">
    <text evidence="1">Part of the 30S ribosomal subunit. Forms a tight heterodimer with protein bS6.</text>
</comment>
<comment type="similarity">
    <text evidence="1">Belongs to the bacterial ribosomal protein bS18 family.</text>
</comment>